<name>PCKG_STRCO</name>
<comment type="function">
    <text evidence="1">Catalyzes the conversion of oxaloacetate (OAA) to phosphoenolpyruvate (PEP), the rate-limiting step in the metabolic pathway that produces glucose from lactate and other precursors derived from the citric acid cycle.</text>
</comment>
<comment type="catalytic activity">
    <reaction evidence="1">
        <text>oxaloacetate + GTP = phosphoenolpyruvate + GDP + CO2</text>
        <dbReference type="Rhea" id="RHEA:10388"/>
        <dbReference type="ChEBI" id="CHEBI:16452"/>
        <dbReference type="ChEBI" id="CHEBI:16526"/>
        <dbReference type="ChEBI" id="CHEBI:37565"/>
        <dbReference type="ChEBI" id="CHEBI:58189"/>
        <dbReference type="ChEBI" id="CHEBI:58702"/>
        <dbReference type="EC" id="4.1.1.32"/>
    </reaction>
</comment>
<comment type="cofactor">
    <cofactor evidence="1">
        <name>Mn(2+)</name>
        <dbReference type="ChEBI" id="CHEBI:29035"/>
    </cofactor>
    <text evidence="1">Binds 1 Mn(2+) ion per subunit.</text>
</comment>
<comment type="pathway">
    <text evidence="1">Carbohydrate biosynthesis; gluconeogenesis.</text>
</comment>
<comment type="subunit">
    <text evidence="1">Monomer.</text>
</comment>
<comment type="subcellular location">
    <subcellularLocation>
        <location evidence="1">Cytoplasm</location>
    </subcellularLocation>
</comment>
<comment type="similarity">
    <text evidence="1">Belongs to the phosphoenolpyruvate carboxykinase [GTP] family.</text>
</comment>
<sequence length="609" mass="66917">MARDIAAPPVPTNHQELISWVNEIAELTQPDAVVWCDGSEAEYERLCGELVEKGTFRKLDPIKRPNSYYAASDPTDVARVEDRTFICSAKEEDAGPTNHWKDPAEMRAIFTGDKGEGGLFRGSMRGRTMYVVPFCMGPLGSPLSALGVEITDSAYVAASMRTMTRMGQPVLDELGDEGFFVKAVHSVGAPLEPGQADVPWPCNSTKYISHFPEDREIWSYGSGYGGNALLGKKCYALRIASVMARDEGWLAEHMLVLKLTPPTGAPKYVAAAFPSACGKTNLAMLEPTISGWTVETIGDDIAWMRFGEDGRLYAINPEAGFFGVAPGTGEHTNANAMKTLWGNSVFTNVALTDDGDVWWEGMTEETPAHLTDWKGNDWTPESGTPAAHPNARFTTPAAQCPIIAPEWEDPRGVPISAILFGGRRATAVPLVTESFDWNHGVFLGANVASEKTAAAEGKVGELRRDPFAMLPFCGYNMGDYMGHWVDVAKDKDQSKLPKIYYVNWFRKDDAGRFVWPGFGENGRVLKWIVERLEGRADGVETPIGVLPTKESLDTDGLDLADADLEFLLSVDKEVWREEAALVPEHLNTFGDHTPAELWDQYRALVRRLG</sequence>
<keyword id="KW-0963">Cytoplasm</keyword>
<keyword id="KW-0210">Decarboxylase</keyword>
<keyword id="KW-0312">Gluconeogenesis</keyword>
<keyword id="KW-0342">GTP-binding</keyword>
<keyword id="KW-0456">Lyase</keyword>
<keyword id="KW-0464">Manganese</keyword>
<keyword id="KW-0479">Metal-binding</keyword>
<keyword id="KW-0547">Nucleotide-binding</keyword>
<keyword id="KW-1185">Reference proteome</keyword>
<protein>
    <recommendedName>
        <fullName evidence="1">Phosphoenolpyruvate carboxykinase [GTP]</fullName>
        <shortName evidence="1">PEP carboxykinase</shortName>
        <shortName evidence="1">PEPCK</shortName>
        <ecNumber evidence="1">4.1.1.32</ecNumber>
    </recommendedName>
</protein>
<feature type="chain" id="PRO_0000103615" description="Phosphoenolpyruvate carboxykinase [GTP]">
    <location>
        <begin position="1"/>
        <end position="609"/>
    </location>
</feature>
<feature type="active site" evidence="1">
    <location>
        <position position="277"/>
    </location>
</feature>
<feature type="binding site" evidence="1">
    <location>
        <position position="79"/>
    </location>
    <ligand>
        <name>substrate</name>
    </ligand>
</feature>
<feature type="binding site" evidence="1">
    <location>
        <begin position="224"/>
        <end position="226"/>
    </location>
    <ligand>
        <name>substrate</name>
    </ligand>
</feature>
<feature type="binding site" evidence="1">
    <location>
        <position position="233"/>
    </location>
    <ligand>
        <name>Mn(2+)</name>
        <dbReference type="ChEBI" id="CHEBI:29035"/>
    </ligand>
</feature>
<feature type="binding site" evidence="1">
    <location>
        <position position="253"/>
    </location>
    <ligand>
        <name>Mn(2+)</name>
        <dbReference type="ChEBI" id="CHEBI:29035"/>
    </ligand>
</feature>
<feature type="binding site" evidence="1">
    <location>
        <position position="275"/>
    </location>
    <ligand>
        <name>substrate</name>
    </ligand>
</feature>
<feature type="binding site" evidence="1">
    <location>
        <begin position="276"/>
        <end position="281"/>
    </location>
    <ligand>
        <name>GTP</name>
        <dbReference type="ChEBI" id="CHEBI:37565"/>
    </ligand>
</feature>
<feature type="binding site" evidence="1">
    <location>
        <position position="300"/>
    </location>
    <ligand>
        <name>Mn(2+)</name>
        <dbReference type="ChEBI" id="CHEBI:29035"/>
    </ligand>
</feature>
<feature type="binding site" evidence="1">
    <location>
        <begin position="390"/>
        <end position="392"/>
    </location>
    <ligand>
        <name>substrate</name>
    </ligand>
</feature>
<feature type="binding site" evidence="1">
    <location>
        <position position="392"/>
    </location>
    <ligand>
        <name>GTP</name>
        <dbReference type="ChEBI" id="CHEBI:37565"/>
    </ligand>
</feature>
<feature type="binding site" evidence="1">
    <location>
        <position position="423"/>
    </location>
    <ligand>
        <name>GTP</name>
        <dbReference type="ChEBI" id="CHEBI:37565"/>
    </ligand>
</feature>
<feature type="binding site" evidence="1">
    <location>
        <begin position="518"/>
        <end position="521"/>
    </location>
    <ligand>
        <name>GTP</name>
        <dbReference type="ChEBI" id="CHEBI:37565"/>
    </ligand>
</feature>
<organism>
    <name type="scientific">Streptomyces coelicolor (strain ATCC BAA-471 / A3(2) / M145)</name>
    <dbReference type="NCBI Taxonomy" id="100226"/>
    <lineage>
        <taxon>Bacteria</taxon>
        <taxon>Bacillati</taxon>
        <taxon>Actinomycetota</taxon>
        <taxon>Actinomycetes</taxon>
        <taxon>Kitasatosporales</taxon>
        <taxon>Streptomycetaceae</taxon>
        <taxon>Streptomyces</taxon>
        <taxon>Streptomyces albidoflavus group</taxon>
    </lineage>
</organism>
<gene>
    <name evidence="1" type="primary">pckG</name>
    <name type="ordered locus">SCO4979</name>
    <name type="ORF">2SCK36.02</name>
</gene>
<dbReference type="EC" id="4.1.1.32" evidence="1"/>
<dbReference type="EMBL" id="AL939122">
    <property type="protein sequence ID" value="CAC40592.1"/>
    <property type="molecule type" value="Genomic_DNA"/>
</dbReference>
<dbReference type="RefSeq" id="NP_629131.1">
    <property type="nucleotide sequence ID" value="NC_003888.3"/>
</dbReference>
<dbReference type="RefSeq" id="WP_003973998.1">
    <property type="nucleotide sequence ID" value="NZ_VNID01000027.1"/>
</dbReference>
<dbReference type="SMR" id="Q93JL5"/>
<dbReference type="FunCoup" id="Q93JL5">
    <property type="interactions" value="97"/>
</dbReference>
<dbReference type="STRING" id="100226.gene:17762628"/>
<dbReference type="PaxDb" id="100226-SCO4979"/>
<dbReference type="KEGG" id="sco:SCO4979"/>
<dbReference type="PATRIC" id="fig|100226.15.peg.5060"/>
<dbReference type="eggNOG" id="COG1274">
    <property type="taxonomic scope" value="Bacteria"/>
</dbReference>
<dbReference type="HOGENOM" id="CLU_028872_1_1_11"/>
<dbReference type="InParanoid" id="Q93JL5"/>
<dbReference type="OrthoDB" id="9758871at2"/>
<dbReference type="PhylomeDB" id="Q93JL5"/>
<dbReference type="UniPathway" id="UPA00138"/>
<dbReference type="Proteomes" id="UP000001973">
    <property type="component" value="Chromosome"/>
</dbReference>
<dbReference type="GO" id="GO:0005829">
    <property type="term" value="C:cytosol"/>
    <property type="evidence" value="ECO:0000318"/>
    <property type="project" value="GO_Central"/>
</dbReference>
<dbReference type="GO" id="GO:0005525">
    <property type="term" value="F:GTP binding"/>
    <property type="evidence" value="ECO:0007669"/>
    <property type="project" value="UniProtKB-UniRule"/>
</dbReference>
<dbReference type="GO" id="GO:0030145">
    <property type="term" value="F:manganese ion binding"/>
    <property type="evidence" value="ECO:0000318"/>
    <property type="project" value="GO_Central"/>
</dbReference>
<dbReference type="GO" id="GO:0004613">
    <property type="term" value="F:phosphoenolpyruvate carboxykinase (GTP) activity"/>
    <property type="evidence" value="ECO:0000318"/>
    <property type="project" value="GO_Central"/>
</dbReference>
<dbReference type="GO" id="GO:0071333">
    <property type="term" value="P:cellular response to glucose stimulus"/>
    <property type="evidence" value="ECO:0000318"/>
    <property type="project" value="GO_Central"/>
</dbReference>
<dbReference type="GO" id="GO:0006094">
    <property type="term" value="P:gluconeogenesis"/>
    <property type="evidence" value="ECO:0000318"/>
    <property type="project" value="GO_Central"/>
</dbReference>
<dbReference type="GO" id="GO:0046327">
    <property type="term" value="P:glycerol biosynthetic process from pyruvate"/>
    <property type="evidence" value="ECO:0000318"/>
    <property type="project" value="GO_Central"/>
</dbReference>
<dbReference type="GO" id="GO:0006107">
    <property type="term" value="P:oxaloacetate metabolic process"/>
    <property type="evidence" value="ECO:0000318"/>
    <property type="project" value="GO_Central"/>
</dbReference>
<dbReference type="GO" id="GO:0019543">
    <property type="term" value="P:propionate catabolic process"/>
    <property type="evidence" value="ECO:0000318"/>
    <property type="project" value="GO_Central"/>
</dbReference>
<dbReference type="GO" id="GO:0033993">
    <property type="term" value="P:response to lipid"/>
    <property type="evidence" value="ECO:0000318"/>
    <property type="project" value="GO_Central"/>
</dbReference>
<dbReference type="GO" id="GO:0042594">
    <property type="term" value="P:response to starvation"/>
    <property type="evidence" value="ECO:0000318"/>
    <property type="project" value="GO_Central"/>
</dbReference>
<dbReference type="CDD" id="cd00819">
    <property type="entry name" value="PEPCK_GTP"/>
    <property type="match status" value="1"/>
</dbReference>
<dbReference type="FunFam" id="2.170.8.10:FF:000003">
    <property type="entry name" value="Phosphoenolpyruvate carboxykinase [GTP]"/>
    <property type="match status" value="1"/>
</dbReference>
<dbReference type="FunFam" id="3.40.449.10:FF:000005">
    <property type="entry name" value="Phosphoenolpyruvate carboxykinase [GTP]"/>
    <property type="match status" value="1"/>
</dbReference>
<dbReference type="Gene3D" id="3.90.228.20">
    <property type="match status" value="1"/>
</dbReference>
<dbReference type="Gene3D" id="3.40.449.10">
    <property type="entry name" value="Phosphoenolpyruvate Carboxykinase, domain 1"/>
    <property type="match status" value="1"/>
</dbReference>
<dbReference type="Gene3D" id="2.170.8.10">
    <property type="entry name" value="Phosphoenolpyruvate Carboxykinase, domain 2"/>
    <property type="match status" value="1"/>
</dbReference>
<dbReference type="HAMAP" id="MF_00452">
    <property type="entry name" value="PEPCK_GTP"/>
    <property type="match status" value="1"/>
</dbReference>
<dbReference type="InterPro" id="IPR018091">
    <property type="entry name" value="PEP_carboxykin_GTP_CS"/>
</dbReference>
<dbReference type="InterPro" id="IPR013035">
    <property type="entry name" value="PEP_carboxykinase_C"/>
</dbReference>
<dbReference type="InterPro" id="IPR008209">
    <property type="entry name" value="PEP_carboxykinase_GTP"/>
</dbReference>
<dbReference type="InterPro" id="IPR035077">
    <property type="entry name" value="PEP_carboxykinase_GTP_C"/>
</dbReference>
<dbReference type="InterPro" id="IPR035078">
    <property type="entry name" value="PEP_carboxykinase_GTP_N"/>
</dbReference>
<dbReference type="InterPro" id="IPR008210">
    <property type="entry name" value="PEP_carboxykinase_N"/>
</dbReference>
<dbReference type="NCBIfam" id="NF003253">
    <property type="entry name" value="PRK04210.1"/>
    <property type="match status" value="1"/>
</dbReference>
<dbReference type="PANTHER" id="PTHR11561">
    <property type="entry name" value="PHOSPHOENOLPYRUVATE CARBOXYKINASE"/>
    <property type="match status" value="1"/>
</dbReference>
<dbReference type="PANTHER" id="PTHR11561:SF0">
    <property type="entry name" value="PHOSPHOENOLPYRUVATE CARBOXYKINASE [GTP]-RELATED"/>
    <property type="match status" value="1"/>
</dbReference>
<dbReference type="Pfam" id="PF00821">
    <property type="entry name" value="PEPCK_GTP"/>
    <property type="match status" value="1"/>
</dbReference>
<dbReference type="Pfam" id="PF17297">
    <property type="entry name" value="PEPCK_N"/>
    <property type="match status" value="1"/>
</dbReference>
<dbReference type="PIRSF" id="PIRSF001348">
    <property type="entry name" value="PEP_carboxykinase_GTP"/>
    <property type="match status" value="1"/>
</dbReference>
<dbReference type="SUPFAM" id="SSF68923">
    <property type="entry name" value="PEP carboxykinase N-terminal domain"/>
    <property type="match status" value="1"/>
</dbReference>
<dbReference type="SUPFAM" id="SSF53795">
    <property type="entry name" value="PEP carboxykinase-like"/>
    <property type="match status" value="1"/>
</dbReference>
<dbReference type="PROSITE" id="PS00505">
    <property type="entry name" value="PEPCK_GTP"/>
    <property type="match status" value="1"/>
</dbReference>
<evidence type="ECO:0000255" key="1">
    <source>
        <dbReference type="HAMAP-Rule" id="MF_00452"/>
    </source>
</evidence>
<accession>Q93JL5</accession>
<proteinExistence type="inferred from homology"/>
<reference key="1">
    <citation type="journal article" date="2002" name="Nature">
        <title>Complete genome sequence of the model actinomycete Streptomyces coelicolor A3(2).</title>
        <authorList>
            <person name="Bentley S.D."/>
            <person name="Chater K.F."/>
            <person name="Cerdeno-Tarraga A.-M."/>
            <person name="Challis G.L."/>
            <person name="Thomson N.R."/>
            <person name="James K.D."/>
            <person name="Harris D.E."/>
            <person name="Quail M.A."/>
            <person name="Kieser H."/>
            <person name="Harper D."/>
            <person name="Bateman A."/>
            <person name="Brown S."/>
            <person name="Chandra G."/>
            <person name="Chen C.W."/>
            <person name="Collins M."/>
            <person name="Cronin A."/>
            <person name="Fraser A."/>
            <person name="Goble A."/>
            <person name="Hidalgo J."/>
            <person name="Hornsby T."/>
            <person name="Howarth S."/>
            <person name="Huang C.-H."/>
            <person name="Kieser T."/>
            <person name="Larke L."/>
            <person name="Murphy L.D."/>
            <person name="Oliver K."/>
            <person name="O'Neil S."/>
            <person name="Rabbinowitsch E."/>
            <person name="Rajandream M.A."/>
            <person name="Rutherford K.M."/>
            <person name="Rutter S."/>
            <person name="Seeger K."/>
            <person name="Saunders D."/>
            <person name="Sharp S."/>
            <person name="Squares R."/>
            <person name="Squares S."/>
            <person name="Taylor K."/>
            <person name="Warren T."/>
            <person name="Wietzorrek A."/>
            <person name="Woodward J.R."/>
            <person name="Barrell B.G."/>
            <person name="Parkhill J."/>
            <person name="Hopwood D.A."/>
        </authorList>
    </citation>
    <scope>NUCLEOTIDE SEQUENCE [LARGE SCALE GENOMIC DNA]</scope>
    <source>
        <strain>ATCC BAA-471 / A3(2) / M145</strain>
    </source>
</reference>